<protein>
    <recommendedName>
        <fullName evidence="1">Large ribosomal subunit protein bL33c</fullName>
    </recommendedName>
    <alternativeName>
        <fullName evidence="2">50S ribosomal protein L33, plastid</fullName>
    </alternativeName>
</protein>
<accession>A7M984</accession>
<geneLocation type="plastid"/>
<keyword id="KW-0934">Plastid</keyword>
<keyword id="KW-0687">Ribonucleoprotein</keyword>
<keyword id="KW-0689">Ribosomal protein</keyword>
<sequence>MAKTKNVRVTVILECTSCAQNNVNVNKVATGISRYITQKNRHNTPNRLEFKKFCPRCYKHTLHGEIKK</sequence>
<comment type="subcellular location">
    <subcellularLocation>
        <location>Plastid</location>
    </subcellularLocation>
</comment>
<comment type="similarity">
    <text evidence="1">Belongs to the bacterial ribosomal protein bL33 family.</text>
</comment>
<comment type="caution">
    <text evidence="2">Young tissue from this organism is photosynthetic and contains some thylakoids, although the photosynthetic activity does not exceed the light compensation point.</text>
</comment>
<dbReference type="EMBL" id="AM711640">
    <property type="protein sequence ID" value="CAM98412.1"/>
    <property type="molecule type" value="Genomic_DNA"/>
</dbReference>
<dbReference type="RefSeq" id="YP_001430126.1">
    <property type="nucleotide sequence ID" value="NC_009766.1"/>
</dbReference>
<dbReference type="GeneID" id="5536644"/>
<dbReference type="GO" id="GO:0009536">
    <property type="term" value="C:plastid"/>
    <property type="evidence" value="ECO:0007669"/>
    <property type="project" value="UniProtKB-SubCell"/>
</dbReference>
<dbReference type="GO" id="GO:1990904">
    <property type="term" value="C:ribonucleoprotein complex"/>
    <property type="evidence" value="ECO:0007669"/>
    <property type="project" value="UniProtKB-KW"/>
</dbReference>
<dbReference type="GO" id="GO:0005840">
    <property type="term" value="C:ribosome"/>
    <property type="evidence" value="ECO:0007669"/>
    <property type="project" value="UniProtKB-KW"/>
</dbReference>
<dbReference type="GO" id="GO:0003735">
    <property type="term" value="F:structural constituent of ribosome"/>
    <property type="evidence" value="ECO:0007669"/>
    <property type="project" value="InterPro"/>
</dbReference>
<dbReference type="GO" id="GO:0006412">
    <property type="term" value="P:translation"/>
    <property type="evidence" value="ECO:0007669"/>
    <property type="project" value="InterPro"/>
</dbReference>
<dbReference type="Gene3D" id="2.20.28.120">
    <property type="entry name" value="Ribosomal protein L33"/>
    <property type="match status" value="1"/>
</dbReference>
<dbReference type="HAMAP" id="MF_00294">
    <property type="entry name" value="Ribosomal_bL33"/>
    <property type="match status" value="1"/>
</dbReference>
<dbReference type="InterPro" id="IPR001705">
    <property type="entry name" value="Ribosomal_bL33"/>
</dbReference>
<dbReference type="InterPro" id="IPR018264">
    <property type="entry name" value="Ribosomal_bL33_CS"/>
</dbReference>
<dbReference type="InterPro" id="IPR038584">
    <property type="entry name" value="Ribosomal_bL33_sf"/>
</dbReference>
<dbReference type="InterPro" id="IPR011332">
    <property type="entry name" value="Ribosomal_zn-bd"/>
</dbReference>
<dbReference type="NCBIfam" id="NF001764">
    <property type="entry name" value="PRK00504.1"/>
    <property type="match status" value="1"/>
</dbReference>
<dbReference type="NCBIfam" id="NF001860">
    <property type="entry name" value="PRK00595.1"/>
    <property type="match status" value="1"/>
</dbReference>
<dbReference type="NCBIfam" id="TIGR01023">
    <property type="entry name" value="rpmG_bact"/>
    <property type="match status" value="1"/>
</dbReference>
<dbReference type="PANTHER" id="PTHR43168">
    <property type="entry name" value="50S RIBOSOMAL PROTEIN L33, CHLOROPLASTIC"/>
    <property type="match status" value="1"/>
</dbReference>
<dbReference type="PANTHER" id="PTHR43168:SF2">
    <property type="entry name" value="LARGE RIBOSOMAL SUBUNIT PROTEIN BL33C"/>
    <property type="match status" value="1"/>
</dbReference>
<dbReference type="Pfam" id="PF00471">
    <property type="entry name" value="Ribosomal_L33"/>
    <property type="match status" value="1"/>
</dbReference>
<dbReference type="SUPFAM" id="SSF57829">
    <property type="entry name" value="Zn-binding ribosomal proteins"/>
    <property type="match status" value="1"/>
</dbReference>
<dbReference type="PROSITE" id="PS00582">
    <property type="entry name" value="RIBOSOMAL_L33"/>
    <property type="match status" value="1"/>
</dbReference>
<evidence type="ECO:0000255" key="1">
    <source>
        <dbReference type="HAMAP-Rule" id="MF_00294"/>
    </source>
</evidence>
<evidence type="ECO:0000305" key="2"/>
<organism>
    <name type="scientific">Cuscuta reflexa</name>
    <name type="common">Southern Asian dodder</name>
    <dbReference type="NCBI Taxonomy" id="4129"/>
    <lineage>
        <taxon>Eukaryota</taxon>
        <taxon>Viridiplantae</taxon>
        <taxon>Streptophyta</taxon>
        <taxon>Embryophyta</taxon>
        <taxon>Tracheophyta</taxon>
        <taxon>Spermatophyta</taxon>
        <taxon>Magnoliopsida</taxon>
        <taxon>eudicotyledons</taxon>
        <taxon>Gunneridae</taxon>
        <taxon>Pentapetalae</taxon>
        <taxon>asterids</taxon>
        <taxon>lamiids</taxon>
        <taxon>Solanales</taxon>
        <taxon>Convolvulaceae</taxon>
        <taxon>Cuscuteae</taxon>
        <taxon>Cuscuta</taxon>
        <taxon>Cuscuta subgen. Monogynella</taxon>
    </lineage>
</organism>
<feature type="chain" id="PRO_0000356799" description="Large ribosomal subunit protein bL33c">
    <location>
        <begin position="1"/>
        <end position="68"/>
    </location>
</feature>
<proteinExistence type="inferred from homology"/>
<name>RK33_CUSRE</name>
<gene>
    <name evidence="1" type="primary">rpl33</name>
</gene>
<reference key="1">
    <citation type="journal article" date="2007" name="BMC Plant Biol.">
        <title>Complete DNA sequences of the plastid genomes of two parasitic flowering plant species, Cuscuta reflexa and Cuscuta gronovii.</title>
        <authorList>
            <person name="Funk H.T."/>
            <person name="Berg S."/>
            <person name="Krupinska K."/>
            <person name="Maier U.-G."/>
            <person name="Krause K."/>
        </authorList>
    </citation>
    <scope>NUCLEOTIDE SEQUENCE [LARGE SCALE GENOMIC DNA]</scope>
</reference>